<protein>
    <recommendedName>
        <fullName evidence="1">Thiamine thiazole synthase</fullName>
        <ecNumber evidence="1">2.4.2.60</ecNumber>
    </recommendedName>
    <alternativeName>
        <fullName evidence="1">Thiazole biosynthetic enzyme</fullName>
    </alternativeName>
</protein>
<keyword id="KW-0963">Cytoplasm</keyword>
<keyword id="KW-0408">Iron</keyword>
<keyword id="KW-0479">Metal-binding</keyword>
<keyword id="KW-0520">NAD</keyword>
<keyword id="KW-0539">Nucleus</keyword>
<keyword id="KW-1185">Reference proteome</keyword>
<keyword id="KW-0784">Thiamine biosynthesis</keyword>
<keyword id="KW-0808">Transferase</keyword>
<proteinExistence type="evidence at transcript level"/>
<gene>
    <name type="primary">thi2</name>
    <name type="synonym">nmt2</name>
    <name type="ORF">SPBC26H8.01</name>
</gene>
<accession>P40998</accession>
<accession>O74785</accession>
<feature type="chain" id="PRO_0000034056" description="Thiamine thiazole synthase">
    <location>
        <begin position="1"/>
        <end position="328"/>
    </location>
</feature>
<feature type="binding site" evidence="1">
    <location>
        <position position="87"/>
    </location>
    <ligand>
        <name>substrate</name>
    </ligand>
</feature>
<feature type="binding site" evidence="1">
    <location>
        <begin position="108"/>
        <end position="109"/>
    </location>
    <ligand>
        <name>substrate</name>
    </ligand>
</feature>
<feature type="binding site" evidence="1">
    <location>
        <position position="116"/>
    </location>
    <ligand>
        <name>substrate</name>
    </ligand>
</feature>
<feature type="binding site" evidence="1">
    <location>
        <position position="181"/>
    </location>
    <ligand>
        <name>substrate</name>
    </ligand>
</feature>
<feature type="binding site" evidence="1">
    <location>
        <position position="217"/>
    </location>
    <ligand>
        <name>substrate</name>
    </ligand>
</feature>
<feature type="binding site" evidence="1">
    <location>
        <position position="232"/>
    </location>
    <ligand>
        <name>substrate</name>
    </ligand>
</feature>
<feature type="binding site" evidence="1">
    <location>
        <position position="284"/>
    </location>
    <ligand>
        <name>substrate</name>
    </ligand>
</feature>
<feature type="binding site" evidence="1">
    <location>
        <begin position="294"/>
        <end position="296"/>
    </location>
    <ligand>
        <name>substrate</name>
    </ligand>
</feature>
<feature type="modified residue" description="2,3-didehydroalanine (Cys)" evidence="1">
    <location>
        <position position="215"/>
    </location>
</feature>
<feature type="sequence conflict" description="In Ref. 1; CAA57779." evidence="4" ref="1">
    <original>FGGMMFSGIKAAQEALAIFDERKAVNEKYL</original>
    <variation>SVV</variation>
    <location>
        <begin position="299"/>
        <end position="328"/>
    </location>
</feature>
<reference key="1">
    <citation type="journal article" date="1994" name="Yeast">
        <title>nmt2 of fission yeast: a second thiamine-repressible gene co-ordinately regulated with nmt1.</title>
        <authorList>
            <person name="Manetti A.G.O."/>
            <person name="Rosetto M."/>
            <person name="Maundrell K.G."/>
        </authorList>
    </citation>
    <scope>NUCLEOTIDE SEQUENCE [GENOMIC DNA]</scope>
    <scope>INDUCTION</scope>
    <source>
        <strain>972 / ATCC 24843</strain>
    </source>
</reference>
<reference key="2">
    <citation type="journal article" date="2002" name="Nature">
        <title>The genome sequence of Schizosaccharomyces pombe.</title>
        <authorList>
            <person name="Wood V."/>
            <person name="Gwilliam R."/>
            <person name="Rajandream M.A."/>
            <person name="Lyne M.H."/>
            <person name="Lyne R."/>
            <person name="Stewart A."/>
            <person name="Sgouros J.G."/>
            <person name="Peat N."/>
            <person name="Hayles J."/>
            <person name="Baker S.G."/>
            <person name="Basham D."/>
            <person name="Bowman S."/>
            <person name="Brooks K."/>
            <person name="Brown D."/>
            <person name="Brown S."/>
            <person name="Chillingworth T."/>
            <person name="Churcher C.M."/>
            <person name="Collins M."/>
            <person name="Connor R."/>
            <person name="Cronin A."/>
            <person name="Davis P."/>
            <person name="Feltwell T."/>
            <person name="Fraser A."/>
            <person name="Gentles S."/>
            <person name="Goble A."/>
            <person name="Hamlin N."/>
            <person name="Harris D.E."/>
            <person name="Hidalgo J."/>
            <person name="Hodgson G."/>
            <person name="Holroyd S."/>
            <person name="Hornsby T."/>
            <person name="Howarth S."/>
            <person name="Huckle E.J."/>
            <person name="Hunt S."/>
            <person name="Jagels K."/>
            <person name="James K.D."/>
            <person name="Jones L."/>
            <person name="Jones M."/>
            <person name="Leather S."/>
            <person name="McDonald S."/>
            <person name="McLean J."/>
            <person name="Mooney P."/>
            <person name="Moule S."/>
            <person name="Mungall K.L."/>
            <person name="Murphy L.D."/>
            <person name="Niblett D."/>
            <person name="Odell C."/>
            <person name="Oliver K."/>
            <person name="O'Neil S."/>
            <person name="Pearson D."/>
            <person name="Quail M.A."/>
            <person name="Rabbinowitsch E."/>
            <person name="Rutherford K.M."/>
            <person name="Rutter S."/>
            <person name="Saunders D."/>
            <person name="Seeger K."/>
            <person name="Sharp S."/>
            <person name="Skelton J."/>
            <person name="Simmonds M.N."/>
            <person name="Squares R."/>
            <person name="Squares S."/>
            <person name="Stevens K."/>
            <person name="Taylor K."/>
            <person name="Taylor R.G."/>
            <person name="Tivey A."/>
            <person name="Walsh S.V."/>
            <person name="Warren T."/>
            <person name="Whitehead S."/>
            <person name="Woodward J.R."/>
            <person name="Volckaert G."/>
            <person name="Aert R."/>
            <person name="Robben J."/>
            <person name="Grymonprez B."/>
            <person name="Weltjens I."/>
            <person name="Vanstreels E."/>
            <person name="Rieger M."/>
            <person name="Schaefer M."/>
            <person name="Mueller-Auer S."/>
            <person name="Gabel C."/>
            <person name="Fuchs M."/>
            <person name="Duesterhoeft A."/>
            <person name="Fritzc C."/>
            <person name="Holzer E."/>
            <person name="Moestl D."/>
            <person name="Hilbert H."/>
            <person name="Borzym K."/>
            <person name="Langer I."/>
            <person name="Beck A."/>
            <person name="Lehrach H."/>
            <person name="Reinhardt R."/>
            <person name="Pohl T.M."/>
            <person name="Eger P."/>
            <person name="Zimmermann W."/>
            <person name="Wedler H."/>
            <person name="Wambutt R."/>
            <person name="Purnelle B."/>
            <person name="Goffeau A."/>
            <person name="Cadieu E."/>
            <person name="Dreano S."/>
            <person name="Gloux S."/>
            <person name="Lelaure V."/>
            <person name="Mottier S."/>
            <person name="Galibert F."/>
            <person name="Aves S.J."/>
            <person name="Xiang Z."/>
            <person name="Hunt C."/>
            <person name="Moore K."/>
            <person name="Hurst S.M."/>
            <person name="Lucas M."/>
            <person name="Rochet M."/>
            <person name="Gaillardin C."/>
            <person name="Tallada V.A."/>
            <person name="Garzon A."/>
            <person name="Thode G."/>
            <person name="Daga R.R."/>
            <person name="Cruzado L."/>
            <person name="Jimenez J."/>
            <person name="Sanchez M."/>
            <person name="del Rey F."/>
            <person name="Benito J."/>
            <person name="Dominguez A."/>
            <person name="Revuelta J.L."/>
            <person name="Moreno S."/>
            <person name="Armstrong J."/>
            <person name="Forsburg S.L."/>
            <person name="Cerutti L."/>
            <person name="Lowe T."/>
            <person name="McCombie W.R."/>
            <person name="Paulsen I."/>
            <person name="Potashkin J."/>
            <person name="Shpakovski G.V."/>
            <person name="Ussery D."/>
            <person name="Barrell B.G."/>
            <person name="Nurse P."/>
        </authorList>
    </citation>
    <scope>NUCLEOTIDE SEQUENCE [LARGE SCALE GENOMIC DNA]</scope>
    <source>
        <strain>972 / ATCC 24843</strain>
    </source>
</reference>
<reference key="3">
    <citation type="journal article" date="2006" name="Nat. Biotechnol.">
        <title>ORFeome cloning and global analysis of protein localization in the fission yeast Schizosaccharomyces pombe.</title>
        <authorList>
            <person name="Matsuyama A."/>
            <person name="Arai R."/>
            <person name="Yashiroda Y."/>
            <person name="Shirai A."/>
            <person name="Kamata A."/>
            <person name="Sekido S."/>
            <person name="Kobayashi Y."/>
            <person name="Hashimoto A."/>
            <person name="Hamamoto M."/>
            <person name="Hiraoka Y."/>
            <person name="Horinouchi S."/>
            <person name="Yoshida M."/>
        </authorList>
    </citation>
    <scope>SUBCELLULAR LOCATION [LARGE SCALE ANALYSIS]</scope>
</reference>
<organism>
    <name type="scientific">Schizosaccharomyces pombe (strain 972 / ATCC 24843)</name>
    <name type="common">Fission yeast</name>
    <dbReference type="NCBI Taxonomy" id="284812"/>
    <lineage>
        <taxon>Eukaryota</taxon>
        <taxon>Fungi</taxon>
        <taxon>Dikarya</taxon>
        <taxon>Ascomycota</taxon>
        <taxon>Taphrinomycotina</taxon>
        <taxon>Schizosaccharomycetes</taxon>
        <taxon>Schizosaccharomycetales</taxon>
        <taxon>Schizosaccharomycetaceae</taxon>
        <taxon>Schizosaccharomyces</taxon>
    </lineage>
</organism>
<sequence length="328" mass="35274">MAPATAVVTPQTAFKTDLPVEKTAHNTVVKSEMGALSKAYPTYSLDESFSFAPIRESTVSRAMTRRYFSDLDKYAESDIVIVGAGSAGLTAAYYIGTRRPDLKIAIIEASVAPGGGAWLGGQLFSAMVVRKPADLFLNEIGVPYEDEGDYVVVKHAALFTSTVMARTLALPNVKLFNATAVEDLIVKEGKDGKQRIAGVVTNWTLVSLNHGLQSCMDPNTINAHLVVSATGHDGPFGAFCVKRLASAQLVSNLHDMRPLDMNRAEDLIVKGTREVFPGMIVGGMELSEFDGANRMGPTFGGMMFSGIKAAQEALAIFDERKAVNEKYL</sequence>
<name>THI4_SCHPO</name>
<comment type="function">
    <text evidence="1">Involved in biosynthesis of the thiamine precursor thiazole. Catalyzes the conversion of NAD and glycine to adenosine diphosphate 5-(2-hydroxyethyl)-4-methylthiazole-2-carboxylic acid (ADT), an adenylated thiazole intermediate. The reaction includes an iron-dependent sulfide transfer from a conserved cysteine residue of the protein to a thiazole intermediate. The enzyme can only undergo a single turnover, which suggests it is a suicide enzyme. May have additional roles in adaptation to various stress conditions and in DNA damage tolerance.</text>
</comment>
<comment type="catalytic activity">
    <reaction evidence="1">
        <text>[ADP-thiazole synthase]-L-cysteine + glycine + NAD(+) = [ADP-thiazole synthase]-dehydroalanine + ADP-5-ethyl-4-methylthiazole-2-carboxylate + nicotinamide + 3 H2O + 2 H(+)</text>
        <dbReference type="Rhea" id="RHEA:55708"/>
        <dbReference type="Rhea" id="RHEA-COMP:14264"/>
        <dbReference type="Rhea" id="RHEA-COMP:14265"/>
        <dbReference type="ChEBI" id="CHEBI:15377"/>
        <dbReference type="ChEBI" id="CHEBI:15378"/>
        <dbReference type="ChEBI" id="CHEBI:17154"/>
        <dbReference type="ChEBI" id="CHEBI:29950"/>
        <dbReference type="ChEBI" id="CHEBI:57305"/>
        <dbReference type="ChEBI" id="CHEBI:57540"/>
        <dbReference type="ChEBI" id="CHEBI:90873"/>
        <dbReference type="ChEBI" id="CHEBI:139151"/>
        <dbReference type="EC" id="2.4.2.60"/>
    </reaction>
</comment>
<comment type="cofactor">
    <cofactor evidence="1">
        <name>Fe cation</name>
        <dbReference type="ChEBI" id="CHEBI:24875"/>
    </cofactor>
    <text evidence="1">Binds 1 Fe cation per subunit.</text>
</comment>
<comment type="subunit">
    <text evidence="1">Homooctamer.</text>
</comment>
<comment type="subcellular location">
    <subcellularLocation>
        <location evidence="1 2">Cytoplasm</location>
    </subcellularLocation>
    <subcellularLocation>
        <location evidence="1 2">Nucleus</location>
    </subcellularLocation>
</comment>
<comment type="induction">
    <text evidence="3">Repressed by thiamine.</text>
</comment>
<comment type="PTM">
    <text evidence="1">During the catalytic reaction, a sulfide is transferred from Cys-215 to a reaction intermediate, generating a dehydroalanine residue.</text>
</comment>
<comment type="similarity">
    <text evidence="1">Belongs to the THI4 family.</text>
</comment>
<dbReference type="EC" id="2.4.2.60" evidence="1"/>
<dbReference type="EMBL" id="X82363">
    <property type="protein sequence ID" value="CAA57779.1"/>
    <property type="molecule type" value="Genomic_DNA"/>
</dbReference>
<dbReference type="EMBL" id="CU329671">
    <property type="protein sequence ID" value="CAA21093.1"/>
    <property type="molecule type" value="Genomic_DNA"/>
</dbReference>
<dbReference type="PIR" id="T40013">
    <property type="entry name" value="T40013"/>
</dbReference>
<dbReference type="RefSeq" id="NP_596642.1">
    <property type="nucleotide sequence ID" value="NM_001022564.2"/>
</dbReference>
<dbReference type="SMR" id="P40998"/>
<dbReference type="BioGRID" id="277054">
    <property type="interactions" value="8"/>
</dbReference>
<dbReference type="FunCoup" id="P40998">
    <property type="interactions" value="563"/>
</dbReference>
<dbReference type="IntAct" id="P40998">
    <property type="interactions" value="1"/>
</dbReference>
<dbReference type="STRING" id="284812.P40998"/>
<dbReference type="iPTMnet" id="P40998"/>
<dbReference type="PaxDb" id="4896-SPBC26H8.01.1"/>
<dbReference type="EnsemblFungi" id="SPBC26H8.01.1">
    <property type="protein sequence ID" value="SPBC26H8.01.1:pep"/>
    <property type="gene ID" value="SPBC26H8.01"/>
</dbReference>
<dbReference type="GeneID" id="2540526"/>
<dbReference type="KEGG" id="spo:2540526"/>
<dbReference type="PomBase" id="SPBC26H8.01">
    <property type="gene designation" value="thi2"/>
</dbReference>
<dbReference type="VEuPathDB" id="FungiDB:SPBC26H8.01"/>
<dbReference type="eggNOG" id="KOG2960">
    <property type="taxonomic scope" value="Eukaryota"/>
</dbReference>
<dbReference type="HOGENOM" id="CLU_053727_0_0_1"/>
<dbReference type="InParanoid" id="P40998"/>
<dbReference type="OMA" id="MFPRIVV"/>
<dbReference type="PhylomeDB" id="P40998"/>
<dbReference type="PRO" id="PR:P40998"/>
<dbReference type="Proteomes" id="UP000002485">
    <property type="component" value="Chromosome II"/>
</dbReference>
<dbReference type="GO" id="GO:0005829">
    <property type="term" value="C:cytosol"/>
    <property type="evidence" value="ECO:0007005"/>
    <property type="project" value="PomBase"/>
</dbReference>
<dbReference type="GO" id="GO:0005634">
    <property type="term" value="C:nucleus"/>
    <property type="evidence" value="ECO:0007005"/>
    <property type="project" value="PomBase"/>
</dbReference>
<dbReference type="GO" id="GO:0160205">
    <property type="term" value="F:cysteine-dependent adenosine diphosphate thiazole synthase activity"/>
    <property type="evidence" value="ECO:0007669"/>
    <property type="project" value="UniProtKB-EC"/>
</dbReference>
<dbReference type="GO" id="GO:0005506">
    <property type="term" value="F:iron ion binding"/>
    <property type="evidence" value="ECO:0000318"/>
    <property type="project" value="GO_Central"/>
</dbReference>
<dbReference type="GO" id="GO:0009228">
    <property type="term" value="P:thiamine biosynthetic process"/>
    <property type="evidence" value="ECO:0000315"/>
    <property type="project" value="PomBase"/>
</dbReference>
<dbReference type="GO" id="GO:0052837">
    <property type="term" value="P:thiazole biosynthetic process"/>
    <property type="evidence" value="ECO:0000315"/>
    <property type="project" value="PomBase"/>
</dbReference>
<dbReference type="Gene3D" id="6.10.250.2840">
    <property type="match status" value="1"/>
</dbReference>
<dbReference type="Gene3D" id="3.50.50.60">
    <property type="entry name" value="FAD/NAD(P)-binding domain"/>
    <property type="match status" value="1"/>
</dbReference>
<dbReference type="HAMAP" id="MF_03158">
    <property type="entry name" value="THI4"/>
    <property type="match status" value="1"/>
</dbReference>
<dbReference type="InterPro" id="IPR036188">
    <property type="entry name" value="FAD/NAD-bd_sf"/>
</dbReference>
<dbReference type="InterPro" id="IPR027495">
    <property type="entry name" value="Sti35"/>
</dbReference>
<dbReference type="InterPro" id="IPR002922">
    <property type="entry name" value="Thi4_fam"/>
</dbReference>
<dbReference type="NCBIfam" id="TIGR00292">
    <property type="entry name" value="sulfide-dependent adenosine diphosphate thiazole synthase"/>
    <property type="match status" value="1"/>
</dbReference>
<dbReference type="PANTHER" id="PTHR43422">
    <property type="entry name" value="THIAMINE THIAZOLE SYNTHASE"/>
    <property type="match status" value="1"/>
</dbReference>
<dbReference type="PANTHER" id="PTHR43422:SF3">
    <property type="entry name" value="THIAMINE THIAZOLE SYNTHASE"/>
    <property type="match status" value="1"/>
</dbReference>
<dbReference type="Pfam" id="PF01946">
    <property type="entry name" value="Thi4"/>
    <property type="match status" value="1"/>
</dbReference>
<dbReference type="SUPFAM" id="SSF51905">
    <property type="entry name" value="FAD/NAD(P)-binding domain"/>
    <property type="match status" value="1"/>
</dbReference>
<evidence type="ECO:0000255" key="1">
    <source>
        <dbReference type="HAMAP-Rule" id="MF_03158"/>
    </source>
</evidence>
<evidence type="ECO:0000269" key="2">
    <source>
    </source>
</evidence>
<evidence type="ECO:0000269" key="3">
    <source>
    </source>
</evidence>
<evidence type="ECO:0000305" key="4"/>